<sequence length="484" mass="53140">MSVKGDIGVIGLAVMGQNLILNMNDHGFKVVAYNRTTSKVDEFLQGAAKGTNIIGAYSLEDLAAKLEKPRKVMLMVRAGDVVDQFIEALLPHLEEGDIIIDGGNSNYPDTNRRVKALAEKGIRFIGSGVSGGEEGARHGPSIMPGGNQEAWQYVKPIFQAISAKTEQGEPCCDWVGGEGAGHFVKMVHNGIEYGDMQLICEAYQFLKEGLGLSYEEMQAIFAEWKNTELDSYLIDITTDILGYKDASGEPLVEKILDTAGQKGTGKWTGINALDFGIPLTLITESVFARCVSSFKDQRVAANQLFGKTITPVEGDKKVWIEAVRKALLASKIISYAQGFMLIREASEQFGWDINYGATALLWREGCIIRSRFLGNIRDAYEANPNLVFLGSDSYFKGILENALSDWRKVVAKSIEVGIPMPCMASAITFLDGYTSARLPANLLQAQRDYFGAHTYERTDKPRGEFFHTNWTGRGGNTASTTYDV</sequence>
<dbReference type="EC" id="1.1.1.44"/>
<dbReference type="EMBL" id="L42023">
    <property type="protein sequence ID" value="AAC22210.1"/>
    <property type="molecule type" value="Genomic_DNA"/>
</dbReference>
<dbReference type="PIR" id="C64077">
    <property type="entry name" value="C64077"/>
</dbReference>
<dbReference type="RefSeq" id="NP_438711.1">
    <property type="nucleotide sequence ID" value="NC_000907.1"/>
</dbReference>
<dbReference type="SMR" id="P43774"/>
<dbReference type="STRING" id="71421.HI_0553"/>
<dbReference type="EnsemblBacteria" id="AAC22210">
    <property type="protein sequence ID" value="AAC22210"/>
    <property type="gene ID" value="HI_0553"/>
</dbReference>
<dbReference type="KEGG" id="hin:HI_0553"/>
<dbReference type="PATRIC" id="fig|71421.8.peg.573"/>
<dbReference type="eggNOG" id="COG0362">
    <property type="taxonomic scope" value="Bacteria"/>
</dbReference>
<dbReference type="HOGENOM" id="CLU_024540_4_2_6"/>
<dbReference type="OrthoDB" id="9804542at2"/>
<dbReference type="PhylomeDB" id="P43774"/>
<dbReference type="BioCyc" id="HINF71421:G1GJ1-566-MONOMER"/>
<dbReference type="SABIO-RK" id="P43774"/>
<dbReference type="UniPathway" id="UPA00115">
    <property type="reaction ID" value="UER00410"/>
</dbReference>
<dbReference type="Proteomes" id="UP000000579">
    <property type="component" value="Chromosome"/>
</dbReference>
<dbReference type="GO" id="GO:0005829">
    <property type="term" value="C:cytosol"/>
    <property type="evidence" value="ECO:0000318"/>
    <property type="project" value="GO_Central"/>
</dbReference>
<dbReference type="GO" id="GO:0050661">
    <property type="term" value="F:NADP binding"/>
    <property type="evidence" value="ECO:0000318"/>
    <property type="project" value="GO_Central"/>
</dbReference>
<dbReference type="GO" id="GO:0004616">
    <property type="term" value="F:phosphogluconate dehydrogenase (decarboxylating) activity"/>
    <property type="evidence" value="ECO:0000318"/>
    <property type="project" value="GO_Central"/>
</dbReference>
<dbReference type="GO" id="GO:0019521">
    <property type="term" value="P:D-gluconate metabolic process"/>
    <property type="evidence" value="ECO:0007669"/>
    <property type="project" value="UniProtKB-KW"/>
</dbReference>
<dbReference type="GO" id="GO:0016054">
    <property type="term" value="P:organic acid catabolic process"/>
    <property type="evidence" value="ECO:0007669"/>
    <property type="project" value="UniProtKB-ARBA"/>
</dbReference>
<dbReference type="GO" id="GO:0009051">
    <property type="term" value="P:pentose-phosphate shunt, oxidative branch"/>
    <property type="evidence" value="ECO:0000318"/>
    <property type="project" value="GO_Central"/>
</dbReference>
<dbReference type="FunFam" id="1.10.1040.10:FF:000002">
    <property type="entry name" value="6-phosphogluconate dehydrogenase, decarboxylating"/>
    <property type="match status" value="1"/>
</dbReference>
<dbReference type="FunFam" id="1.20.5.320:FF:000002">
    <property type="entry name" value="6-phosphogluconate dehydrogenase, decarboxylating"/>
    <property type="match status" value="1"/>
</dbReference>
<dbReference type="FunFam" id="3.40.50.720:FF:000007">
    <property type="entry name" value="6-phosphogluconate dehydrogenase, decarboxylating"/>
    <property type="match status" value="1"/>
</dbReference>
<dbReference type="Gene3D" id="1.20.5.320">
    <property type="entry name" value="6-Phosphogluconate Dehydrogenase, domain 3"/>
    <property type="match status" value="1"/>
</dbReference>
<dbReference type="Gene3D" id="1.10.1040.10">
    <property type="entry name" value="N-(1-d-carboxylethyl)-l-norvaline Dehydrogenase, domain 2"/>
    <property type="match status" value="1"/>
</dbReference>
<dbReference type="Gene3D" id="3.40.50.720">
    <property type="entry name" value="NAD(P)-binding Rossmann-like Domain"/>
    <property type="match status" value="1"/>
</dbReference>
<dbReference type="InterPro" id="IPR008927">
    <property type="entry name" value="6-PGluconate_DH-like_C_sf"/>
</dbReference>
<dbReference type="InterPro" id="IPR013328">
    <property type="entry name" value="6PGD_dom2"/>
</dbReference>
<dbReference type="InterPro" id="IPR006114">
    <property type="entry name" value="6PGDH_C"/>
</dbReference>
<dbReference type="InterPro" id="IPR006113">
    <property type="entry name" value="6PGDH_Gnd/GntZ"/>
</dbReference>
<dbReference type="InterPro" id="IPR006115">
    <property type="entry name" value="6PGDH_NADP-bd"/>
</dbReference>
<dbReference type="InterPro" id="IPR006184">
    <property type="entry name" value="6PGdom_BS"/>
</dbReference>
<dbReference type="InterPro" id="IPR036291">
    <property type="entry name" value="NAD(P)-bd_dom_sf"/>
</dbReference>
<dbReference type="InterPro" id="IPR006183">
    <property type="entry name" value="Pgluconate_DH"/>
</dbReference>
<dbReference type="NCBIfam" id="TIGR00873">
    <property type="entry name" value="gnd"/>
    <property type="match status" value="1"/>
</dbReference>
<dbReference type="NCBIfam" id="NF006765">
    <property type="entry name" value="PRK09287.1"/>
    <property type="match status" value="1"/>
</dbReference>
<dbReference type="PANTHER" id="PTHR11811">
    <property type="entry name" value="6-PHOSPHOGLUCONATE DEHYDROGENASE"/>
    <property type="match status" value="1"/>
</dbReference>
<dbReference type="Pfam" id="PF00393">
    <property type="entry name" value="6PGD"/>
    <property type="match status" value="1"/>
</dbReference>
<dbReference type="Pfam" id="PF03446">
    <property type="entry name" value="NAD_binding_2"/>
    <property type="match status" value="1"/>
</dbReference>
<dbReference type="PIRSF" id="PIRSF000109">
    <property type="entry name" value="6PGD"/>
    <property type="match status" value="1"/>
</dbReference>
<dbReference type="PRINTS" id="PR00076">
    <property type="entry name" value="6PGDHDRGNASE"/>
</dbReference>
<dbReference type="SMART" id="SM01350">
    <property type="entry name" value="6PGD"/>
    <property type="match status" value="1"/>
</dbReference>
<dbReference type="SUPFAM" id="SSF48179">
    <property type="entry name" value="6-phosphogluconate dehydrogenase C-terminal domain-like"/>
    <property type="match status" value="1"/>
</dbReference>
<dbReference type="SUPFAM" id="SSF51735">
    <property type="entry name" value="NAD(P)-binding Rossmann-fold domains"/>
    <property type="match status" value="1"/>
</dbReference>
<dbReference type="PROSITE" id="PS00461">
    <property type="entry name" value="6PGD"/>
    <property type="match status" value="1"/>
</dbReference>
<keyword id="KW-0311">Gluconate utilization</keyword>
<keyword id="KW-0521">NADP</keyword>
<keyword id="KW-0560">Oxidoreductase</keyword>
<keyword id="KW-0570">Pentose shunt</keyword>
<keyword id="KW-1185">Reference proteome</keyword>
<name>6PGD_HAEIN</name>
<reference key="1">
    <citation type="journal article" date="1995" name="Science">
        <title>Whole-genome random sequencing and assembly of Haemophilus influenzae Rd.</title>
        <authorList>
            <person name="Fleischmann R.D."/>
            <person name="Adams M.D."/>
            <person name="White O."/>
            <person name="Clayton R.A."/>
            <person name="Kirkness E.F."/>
            <person name="Kerlavage A.R."/>
            <person name="Bult C.J."/>
            <person name="Tomb J.-F."/>
            <person name="Dougherty B.A."/>
            <person name="Merrick J.M."/>
            <person name="McKenney K."/>
            <person name="Sutton G.G."/>
            <person name="FitzHugh W."/>
            <person name="Fields C.A."/>
            <person name="Gocayne J.D."/>
            <person name="Scott J.D."/>
            <person name="Shirley R."/>
            <person name="Liu L.-I."/>
            <person name="Glodek A."/>
            <person name="Kelley J.M."/>
            <person name="Weidman J.F."/>
            <person name="Phillips C.A."/>
            <person name="Spriggs T."/>
            <person name="Hedblom E."/>
            <person name="Cotton M.D."/>
            <person name="Utterback T.R."/>
            <person name="Hanna M.C."/>
            <person name="Nguyen D.T."/>
            <person name="Saudek D.M."/>
            <person name="Brandon R.C."/>
            <person name="Fine L.D."/>
            <person name="Fritchman J.L."/>
            <person name="Fuhrmann J.L."/>
            <person name="Geoghagen N.S.M."/>
            <person name="Gnehm C.L."/>
            <person name="McDonald L.A."/>
            <person name="Small K.V."/>
            <person name="Fraser C.M."/>
            <person name="Smith H.O."/>
            <person name="Venter J.C."/>
        </authorList>
    </citation>
    <scope>NUCLEOTIDE SEQUENCE [LARGE SCALE GENOMIC DNA]</scope>
    <source>
        <strain>ATCC 51907 / DSM 11121 / KW20 / Rd</strain>
    </source>
</reference>
<protein>
    <recommendedName>
        <fullName>6-phosphogluconate dehydrogenase, decarboxylating</fullName>
        <ecNumber>1.1.1.44</ecNumber>
    </recommendedName>
</protein>
<comment type="function">
    <text evidence="1">Catalyzes the oxidative decarboxylation of 6-phosphogluconate to ribulose 5-phosphate and CO(2), with concomitant reduction of NADP to NADPH.</text>
</comment>
<comment type="catalytic activity">
    <reaction>
        <text>6-phospho-D-gluconate + NADP(+) = D-ribulose 5-phosphate + CO2 + NADPH</text>
        <dbReference type="Rhea" id="RHEA:10116"/>
        <dbReference type="ChEBI" id="CHEBI:16526"/>
        <dbReference type="ChEBI" id="CHEBI:57783"/>
        <dbReference type="ChEBI" id="CHEBI:58121"/>
        <dbReference type="ChEBI" id="CHEBI:58349"/>
        <dbReference type="ChEBI" id="CHEBI:58759"/>
        <dbReference type="EC" id="1.1.1.44"/>
    </reaction>
</comment>
<comment type="pathway">
    <text>Carbohydrate degradation; pentose phosphate pathway; D-ribulose 5-phosphate from D-glucose 6-phosphate (oxidative stage): step 3/3.</text>
</comment>
<comment type="subunit">
    <text evidence="1">Homodimer.</text>
</comment>
<comment type="similarity">
    <text evidence="2">Belongs to the 6-phosphogluconate dehydrogenase family.</text>
</comment>
<proteinExistence type="inferred from homology"/>
<feature type="chain" id="PRO_0000090041" description="6-phosphogluconate dehydrogenase, decarboxylating">
    <location>
        <begin position="1"/>
        <end position="484"/>
    </location>
</feature>
<feature type="active site" description="Proton acceptor" evidence="1">
    <location>
        <position position="185"/>
    </location>
</feature>
<feature type="active site" description="Proton donor" evidence="1">
    <location>
        <position position="192"/>
    </location>
</feature>
<feature type="binding site" evidence="1">
    <location>
        <begin position="11"/>
        <end position="16"/>
    </location>
    <ligand>
        <name>NADP(+)</name>
        <dbReference type="ChEBI" id="CHEBI:58349"/>
    </ligand>
</feature>
<feature type="binding site" evidence="1">
    <location>
        <begin position="34"/>
        <end position="36"/>
    </location>
    <ligand>
        <name>NADP(+)</name>
        <dbReference type="ChEBI" id="CHEBI:58349"/>
    </ligand>
</feature>
<feature type="binding site" evidence="1">
    <location>
        <begin position="76"/>
        <end position="78"/>
    </location>
    <ligand>
        <name>NADP(+)</name>
        <dbReference type="ChEBI" id="CHEBI:58349"/>
    </ligand>
</feature>
<feature type="binding site" evidence="1">
    <location>
        <position position="104"/>
    </location>
    <ligand>
        <name>NADP(+)</name>
        <dbReference type="ChEBI" id="CHEBI:58349"/>
    </ligand>
</feature>
<feature type="binding site" description="in other chain" evidence="1">
    <location>
        <position position="104"/>
    </location>
    <ligand>
        <name>substrate</name>
        <note>ligand shared between dimeric partners</note>
    </ligand>
</feature>
<feature type="binding site" description="in other chain" evidence="1">
    <location>
        <begin position="130"/>
        <end position="132"/>
    </location>
    <ligand>
        <name>substrate</name>
        <note>ligand shared between dimeric partners</note>
    </ligand>
</feature>
<feature type="binding site" description="in other chain" evidence="1">
    <location>
        <begin position="188"/>
        <end position="189"/>
    </location>
    <ligand>
        <name>substrate</name>
        <note>ligand shared between dimeric partners</note>
    </ligand>
</feature>
<feature type="binding site" description="in other chain" evidence="1">
    <location>
        <position position="193"/>
    </location>
    <ligand>
        <name>substrate</name>
        <note>ligand shared between dimeric partners</note>
    </ligand>
</feature>
<feature type="binding site" description="in other chain" evidence="1">
    <location>
        <position position="262"/>
    </location>
    <ligand>
        <name>substrate</name>
        <note>ligand shared between dimeric partners</note>
    </ligand>
</feature>
<feature type="binding site" description="in other chain" evidence="1">
    <location>
        <position position="289"/>
    </location>
    <ligand>
        <name>substrate</name>
        <note>ligand shared between dimeric partners</note>
    </ligand>
</feature>
<feature type="binding site" evidence="1">
    <location>
        <position position="447"/>
    </location>
    <ligand>
        <name>substrate</name>
        <note>ligand shared between dimeric partners</note>
    </ligand>
</feature>
<feature type="binding site" evidence="1">
    <location>
        <position position="453"/>
    </location>
    <ligand>
        <name>substrate</name>
        <note>ligand shared between dimeric partners</note>
    </ligand>
</feature>
<organism>
    <name type="scientific">Haemophilus influenzae (strain ATCC 51907 / DSM 11121 / KW20 / Rd)</name>
    <dbReference type="NCBI Taxonomy" id="71421"/>
    <lineage>
        <taxon>Bacteria</taxon>
        <taxon>Pseudomonadati</taxon>
        <taxon>Pseudomonadota</taxon>
        <taxon>Gammaproteobacteria</taxon>
        <taxon>Pasteurellales</taxon>
        <taxon>Pasteurellaceae</taxon>
        <taxon>Haemophilus</taxon>
    </lineage>
</organism>
<accession>P43774</accession>
<evidence type="ECO:0000250" key="1"/>
<evidence type="ECO:0000305" key="2"/>
<gene>
    <name type="primary">gnd</name>
    <name type="ordered locus">HI_0553</name>
</gene>